<gene>
    <name evidence="1" type="primary">rph</name>
    <name type="ordered locus">XF_1505</name>
</gene>
<sequence>MNVSRPSGRQADALRPVRIERAFTCHAEGSVLVSFGNTLVVCTASVEAKVPVFLRNKGEGWVTAEYGMLPRSTHTRSEREAARGKQAGRTLEIQRLIGRALRTCVDRTALGERTITLDCDVLQADGGTRTAAITGAYVALVDAVRCLEQRGQLKKSPLIGAVAAVSVGIYRGMPVLDLDYPEDSDCDTDMNVVMNDEGGVIELQGTAEQQAFRRGELDMLLALAERGTAMLFDIQREALAR</sequence>
<evidence type="ECO:0000255" key="1">
    <source>
        <dbReference type="HAMAP-Rule" id="MF_00564"/>
    </source>
</evidence>
<name>RNPH_XYLFA</name>
<proteinExistence type="inferred from homology"/>
<keyword id="KW-0548">Nucleotidyltransferase</keyword>
<keyword id="KW-0694">RNA-binding</keyword>
<keyword id="KW-0698">rRNA processing</keyword>
<keyword id="KW-0808">Transferase</keyword>
<keyword id="KW-0819">tRNA processing</keyword>
<keyword id="KW-0820">tRNA-binding</keyword>
<organism>
    <name type="scientific">Xylella fastidiosa (strain 9a5c)</name>
    <dbReference type="NCBI Taxonomy" id="160492"/>
    <lineage>
        <taxon>Bacteria</taxon>
        <taxon>Pseudomonadati</taxon>
        <taxon>Pseudomonadota</taxon>
        <taxon>Gammaproteobacteria</taxon>
        <taxon>Lysobacterales</taxon>
        <taxon>Lysobacteraceae</taxon>
        <taxon>Xylella</taxon>
    </lineage>
</organism>
<comment type="function">
    <text evidence="1">Phosphorolytic 3'-5' exoribonuclease that plays an important role in tRNA 3'-end maturation. Removes nucleotide residues following the 3'-CCA terminus of tRNAs; can also add nucleotides to the ends of RNA molecules by using nucleoside diphosphates as substrates, but this may not be physiologically important. Probably plays a role in initiation of 16S rRNA degradation (leading to ribosome degradation) during starvation.</text>
</comment>
<comment type="catalytic activity">
    <reaction evidence="1">
        <text>tRNA(n+1) + phosphate = tRNA(n) + a ribonucleoside 5'-diphosphate</text>
        <dbReference type="Rhea" id="RHEA:10628"/>
        <dbReference type="Rhea" id="RHEA-COMP:17343"/>
        <dbReference type="Rhea" id="RHEA-COMP:17344"/>
        <dbReference type="ChEBI" id="CHEBI:43474"/>
        <dbReference type="ChEBI" id="CHEBI:57930"/>
        <dbReference type="ChEBI" id="CHEBI:173114"/>
        <dbReference type="EC" id="2.7.7.56"/>
    </reaction>
</comment>
<comment type="subunit">
    <text evidence="1">Homohexameric ring arranged as a trimer of dimers.</text>
</comment>
<comment type="similarity">
    <text evidence="1">Belongs to the RNase PH family.</text>
</comment>
<feature type="chain" id="PRO_0000139953" description="Ribonuclease PH">
    <location>
        <begin position="1"/>
        <end position="241"/>
    </location>
</feature>
<feature type="binding site" evidence="1">
    <location>
        <position position="89"/>
    </location>
    <ligand>
        <name>phosphate</name>
        <dbReference type="ChEBI" id="CHEBI:43474"/>
        <note>substrate</note>
    </ligand>
</feature>
<feature type="binding site" evidence="1">
    <location>
        <begin position="127"/>
        <end position="129"/>
    </location>
    <ligand>
        <name>phosphate</name>
        <dbReference type="ChEBI" id="CHEBI:43474"/>
        <note>substrate</note>
    </ligand>
</feature>
<reference key="1">
    <citation type="journal article" date="2000" name="Nature">
        <title>The genome sequence of the plant pathogen Xylella fastidiosa.</title>
        <authorList>
            <person name="Simpson A.J.G."/>
            <person name="Reinach F.C."/>
            <person name="Arruda P."/>
            <person name="Abreu F.A."/>
            <person name="Acencio M."/>
            <person name="Alvarenga R."/>
            <person name="Alves L.M.C."/>
            <person name="Araya J.E."/>
            <person name="Baia G.S."/>
            <person name="Baptista C.S."/>
            <person name="Barros M.H."/>
            <person name="Bonaccorsi E.D."/>
            <person name="Bordin S."/>
            <person name="Bove J.M."/>
            <person name="Briones M.R.S."/>
            <person name="Bueno M.R.P."/>
            <person name="Camargo A.A."/>
            <person name="Camargo L.E.A."/>
            <person name="Carraro D.M."/>
            <person name="Carrer H."/>
            <person name="Colauto N.B."/>
            <person name="Colombo C."/>
            <person name="Costa F.F."/>
            <person name="Costa M.C.R."/>
            <person name="Costa-Neto C.M."/>
            <person name="Coutinho L.L."/>
            <person name="Cristofani M."/>
            <person name="Dias-Neto E."/>
            <person name="Docena C."/>
            <person name="El-Dorry H."/>
            <person name="Facincani A.P."/>
            <person name="Ferreira A.J.S."/>
            <person name="Ferreira V.C.A."/>
            <person name="Ferro J.A."/>
            <person name="Fraga J.S."/>
            <person name="Franca S.C."/>
            <person name="Franco M.C."/>
            <person name="Frohme M."/>
            <person name="Furlan L.R."/>
            <person name="Garnier M."/>
            <person name="Goldman G.H."/>
            <person name="Goldman M.H.S."/>
            <person name="Gomes S.L."/>
            <person name="Gruber A."/>
            <person name="Ho P.L."/>
            <person name="Hoheisel J.D."/>
            <person name="Junqueira M.L."/>
            <person name="Kemper E.L."/>
            <person name="Kitajima J.P."/>
            <person name="Krieger J.E."/>
            <person name="Kuramae E.E."/>
            <person name="Laigret F."/>
            <person name="Lambais M.R."/>
            <person name="Leite L.C.C."/>
            <person name="Lemos E.G.M."/>
            <person name="Lemos M.V.F."/>
            <person name="Lopes S.A."/>
            <person name="Lopes C.R."/>
            <person name="Machado J.A."/>
            <person name="Machado M.A."/>
            <person name="Madeira A.M.B.N."/>
            <person name="Madeira H.M.F."/>
            <person name="Marino C.L."/>
            <person name="Marques M.V."/>
            <person name="Martins E.A.L."/>
            <person name="Martins E.M.F."/>
            <person name="Matsukuma A.Y."/>
            <person name="Menck C.F.M."/>
            <person name="Miracca E.C."/>
            <person name="Miyaki C.Y."/>
            <person name="Monteiro-Vitorello C.B."/>
            <person name="Moon D.H."/>
            <person name="Nagai M.A."/>
            <person name="Nascimento A.L.T.O."/>
            <person name="Netto L.E.S."/>
            <person name="Nhani A. Jr."/>
            <person name="Nobrega F.G."/>
            <person name="Nunes L.R."/>
            <person name="Oliveira M.A."/>
            <person name="de Oliveira M.C."/>
            <person name="de Oliveira R.C."/>
            <person name="Palmieri D.A."/>
            <person name="Paris A."/>
            <person name="Peixoto B.R."/>
            <person name="Pereira G.A.G."/>
            <person name="Pereira H.A. Jr."/>
            <person name="Pesquero J.B."/>
            <person name="Quaggio R.B."/>
            <person name="Roberto P.G."/>
            <person name="Rodrigues V."/>
            <person name="de Rosa A.J.M."/>
            <person name="de Rosa V.E. Jr."/>
            <person name="de Sa R.G."/>
            <person name="Santelli R.V."/>
            <person name="Sawasaki H.E."/>
            <person name="da Silva A.C.R."/>
            <person name="da Silva A.M."/>
            <person name="da Silva F.R."/>
            <person name="Silva W.A. Jr."/>
            <person name="da Silveira J.F."/>
            <person name="Silvestri M.L.Z."/>
            <person name="Siqueira W.J."/>
            <person name="de Souza A.A."/>
            <person name="de Souza A.P."/>
            <person name="Terenzi M.F."/>
            <person name="Truffi D."/>
            <person name="Tsai S.M."/>
            <person name="Tsuhako M.H."/>
            <person name="Vallada H."/>
            <person name="Van Sluys M.A."/>
            <person name="Verjovski-Almeida S."/>
            <person name="Vettore A.L."/>
            <person name="Zago M.A."/>
            <person name="Zatz M."/>
            <person name="Meidanis J."/>
            <person name="Setubal J.C."/>
        </authorList>
    </citation>
    <scope>NUCLEOTIDE SEQUENCE [LARGE SCALE GENOMIC DNA]</scope>
    <source>
        <strain>9a5c</strain>
    </source>
</reference>
<accession>Q9PD74</accession>
<protein>
    <recommendedName>
        <fullName evidence="1">Ribonuclease PH</fullName>
        <shortName evidence="1">RNase PH</shortName>
        <ecNumber evidence="1">2.7.7.56</ecNumber>
    </recommendedName>
    <alternativeName>
        <fullName evidence="1">tRNA nucleotidyltransferase</fullName>
    </alternativeName>
</protein>
<dbReference type="EC" id="2.7.7.56" evidence="1"/>
<dbReference type="EMBL" id="AE003849">
    <property type="protein sequence ID" value="AAF84314.1"/>
    <property type="molecule type" value="Genomic_DNA"/>
</dbReference>
<dbReference type="PIR" id="C82673">
    <property type="entry name" value="C82673"/>
</dbReference>
<dbReference type="RefSeq" id="WP_010894006.1">
    <property type="nucleotide sequence ID" value="NC_002488.3"/>
</dbReference>
<dbReference type="SMR" id="Q9PD74"/>
<dbReference type="STRING" id="160492.XF_1505"/>
<dbReference type="KEGG" id="xfa:XF_1505"/>
<dbReference type="eggNOG" id="COG0689">
    <property type="taxonomic scope" value="Bacteria"/>
</dbReference>
<dbReference type="HOGENOM" id="CLU_050858_0_0_6"/>
<dbReference type="Proteomes" id="UP000000812">
    <property type="component" value="Chromosome"/>
</dbReference>
<dbReference type="GO" id="GO:0000175">
    <property type="term" value="F:3'-5'-RNA exonuclease activity"/>
    <property type="evidence" value="ECO:0007669"/>
    <property type="project" value="UniProtKB-UniRule"/>
</dbReference>
<dbReference type="GO" id="GO:0000049">
    <property type="term" value="F:tRNA binding"/>
    <property type="evidence" value="ECO:0007669"/>
    <property type="project" value="UniProtKB-UniRule"/>
</dbReference>
<dbReference type="GO" id="GO:0009022">
    <property type="term" value="F:tRNA nucleotidyltransferase activity"/>
    <property type="evidence" value="ECO:0007669"/>
    <property type="project" value="UniProtKB-UniRule"/>
</dbReference>
<dbReference type="GO" id="GO:0016075">
    <property type="term" value="P:rRNA catabolic process"/>
    <property type="evidence" value="ECO:0007669"/>
    <property type="project" value="UniProtKB-UniRule"/>
</dbReference>
<dbReference type="GO" id="GO:0006364">
    <property type="term" value="P:rRNA processing"/>
    <property type="evidence" value="ECO:0007669"/>
    <property type="project" value="UniProtKB-KW"/>
</dbReference>
<dbReference type="GO" id="GO:0008033">
    <property type="term" value="P:tRNA processing"/>
    <property type="evidence" value="ECO:0007669"/>
    <property type="project" value="UniProtKB-UniRule"/>
</dbReference>
<dbReference type="CDD" id="cd11362">
    <property type="entry name" value="RNase_PH_bact"/>
    <property type="match status" value="1"/>
</dbReference>
<dbReference type="FunFam" id="3.30.230.70:FF:000003">
    <property type="entry name" value="Ribonuclease PH"/>
    <property type="match status" value="1"/>
</dbReference>
<dbReference type="Gene3D" id="3.30.230.70">
    <property type="entry name" value="GHMP Kinase, N-terminal domain"/>
    <property type="match status" value="1"/>
</dbReference>
<dbReference type="HAMAP" id="MF_00564">
    <property type="entry name" value="RNase_PH"/>
    <property type="match status" value="1"/>
</dbReference>
<dbReference type="InterPro" id="IPR001247">
    <property type="entry name" value="ExoRNase_PH_dom1"/>
</dbReference>
<dbReference type="InterPro" id="IPR015847">
    <property type="entry name" value="ExoRNase_PH_dom2"/>
</dbReference>
<dbReference type="InterPro" id="IPR036345">
    <property type="entry name" value="ExoRNase_PH_dom2_sf"/>
</dbReference>
<dbReference type="InterPro" id="IPR027408">
    <property type="entry name" value="PNPase/RNase_PH_dom_sf"/>
</dbReference>
<dbReference type="InterPro" id="IPR020568">
    <property type="entry name" value="Ribosomal_Su5_D2-typ_SF"/>
</dbReference>
<dbReference type="InterPro" id="IPR050080">
    <property type="entry name" value="RNase_PH"/>
</dbReference>
<dbReference type="InterPro" id="IPR002381">
    <property type="entry name" value="RNase_PH_bac-type"/>
</dbReference>
<dbReference type="InterPro" id="IPR018336">
    <property type="entry name" value="RNase_PH_CS"/>
</dbReference>
<dbReference type="NCBIfam" id="TIGR01966">
    <property type="entry name" value="RNasePH"/>
    <property type="match status" value="1"/>
</dbReference>
<dbReference type="PANTHER" id="PTHR11953">
    <property type="entry name" value="EXOSOME COMPLEX COMPONENT"/>
    <property type="match status" value="1"/>
</dbReference>
<dbReference type="PANTHER" id="PTHR11953:SF0">
    <property type="entry name" value="EXOSOME COMPLEX COMPONENT RRP41"/>
    <property type="match status" value="1"/>
</dbReference>
<dbReference type="Pfam" id="PF01138">
    <property type="entry name" value="RNase_PH"/>
    <property type="match status" value="1"/>
</dbReference>
<dbReference type="Pfam" id="PF03725">
    <property type="entry name" value="RNase_PH_C"/>
    <property type="match status" value="1"/>
</dbReference>
<dbReference type="SUPFAM" id="SSF55666">
    <property type="entry name" value="Ribonuclease PH domain 2-like"/>
    <property type="match status" value="1"/>
</dbReference>
<dbReference type="SUPFAM" id="SSF54211">
    <property type="entry name" value="Ribosomal protein S5 domain 2-like"/>
    <property type="match status" value="1"/>
</dbReference>
<dbReference type="PROSITE" id="PS01277">
    <property type="entry name" value="RIBONUCLEASE_PH"/>
    <property type="match status" value="1"/>
</dbReference>